<name>LPXB_BURP1</name>
<dbReference type="EC" id="2.4.1.182" evidence="1"/>
<dbReference type="EMBL" id="CP000124">
    <property type="protein sequence ID" value="ABA47758.1"/>
    <property type="molecule type" value="Genomic_DNA"/>
</dbReference>
<dbReference type="RefSeq" id="WP_004527287.1">
    <property type="nucleotide sequence ID" value="NC_007434.1"/>
</dbReference>
<dbReference type="SMR" id="Q3JR42"/>
<dbReference type="CAZy" id="GT19">
    <property type="family name" value="Glycosyltransferase Family 19"/>
</dbReference>
<dbReference type="EnsemblBacteria" id="ABA47758">
    <property type="protein sequence ID" value="ABA47758"/>
    <property type="gene ID" value="BURPS1710b_2569"/>
</dbReference>
<dbReference type="KEGG" id="bpm:BURPS1710b_2569"/>
<dbReference type="HOGENOM" id="CLU_036577_3_0_4"/>
<dbReference type="UniPathway" id="UPA00973"/>
<dbReference type="Proteomes" id="UP000002700">
    <property type="component" value="Chromosome I"/>
</dbReference>
<dbReference type="GO" id="GO:0016020">
    <property type="term" value="C:membrane"/>
    <property type="evidence" value="ECO:0007669"/>
    <property type="project" value="GOC"/>
</dbReference>
<dbReference type="GO" id="GO:0008915">
    <property type="term" value="F:lipid-A-disaccharide synthase activity"/>
    <property type="evidence" value="ECO:0007669"/>
    <property type="project" value="UniProtKB-UniRule"/>
</dbReference>
<dbReference type="GO" id="GO:0005543">
    <property type="term" value="F:phospholipid binding"/>
    <property type="evidence" value="ECO:0007669"/>
    <property type="project" value="TreeGrafter"/>
</dbReference>
<dbReference type="GO" id="GO:0009245">
    <property type="term" value="P:lipid A biosynthetic process"/>
    <property type="evidence" value="ECO:0007669"/>
    <property type="project" value="UniProtKB-UniRule"/>
</dbReference>
<dbReference type="HAMAP" id="MF_00392">
    <property type="entry name" value="LpxB"/>
    <property type="match status" value="1"/>
</dbReference>
<dbReference type="InterPro" id="IPR003835">
    <property type="entry name" value="Glyco_trans_19"/>
</dbReference>
<dbReference type="NCBIfam" id="TIGR00215">
    <property type="entry name" value="lpxB"/>
    <property type="match status" value="1"/>
</dbReference>
<dbReference type="PANTHER" id="PTHR30372">
    <property type="entry name" value="LIPID-A-DISACCHARIDE SYNTHASE"/>
    <property type="match status" value="1"/>
</dbReference>
<dbReference type="PANTHER" id="PTHR30372:SF4">
    <property type="entry name" value="LIPID-A-DISACCHARIDE SYNTHASE, MITOCHONDRIAL-RELATED"/>
    <property type="match status" value="1"/>
</dbReference>
<dbReference type="Pfam" id="PF02684">
    <property type="entry name" value="LpxB"/>
    <property type="match status" value="1"/>
</dbReference>
<dbReference type="SUPFAM" id="SSF53756">
    <property type="entry name" value="UDP-Glycosyltransferase/glycogen phosphorylase"/>
    <property type="match status" value="1"/>
</dbReference>
<gene>
    <name evidence="1" type="primary">lpxB</name>
    <name type="ordered locus">BURPS1710b_2569</name>
</gene>
<keyword id="KW-0328">Glycosyltransferase</keyword>
<keyword id="KW-0441">Lipid A biosynthesis</keyword>
<keyword id="KW-0444">Lipid biosynthesis</keyword>
<keyword id="KW-0443">Lipid metabolism</keyword>
<keyword id="KW-0808">Transferase</keyword>
<evidence type="ECO:0000255" key="1">
    <source>
        <dbReference type="HAMAP-Rule" id="MF_00392"/>
    </source>
</evidence>
<sequence>MAFQLTPLRVALVAGEPSGDLLGASLLGGLHARLPASSRYYGIGGPRMSAVEFDAHWPMEKLAVRGYVEALKHIPEILRIRGELKRQLLAEPPDAFVGIDAPDFNFGLEPALRGAGIPTIHFVCPSIWAWRGGRIKKIVKAVDHMLCLFPFEPELLEKAGVAATFVGHPLADEIPLEPDTHGARIALGLPGGGPVIAVLPGSRRSEIELIGPTFFDAMELMQQREPGVRFVVPAATPALRALLQPLVDAHPSLSVTLTEGRAQVAMTAADAILVKSGTVTLEAALLKKPMVISYKVPWLTGQIMRRQGYLPYVGLPNILAGRFVVPELLQHFATPDALADATLTQLRDDANRRALTDIFTDMHLALRQNTAQRAAEAVARVIDSRKPR</sequence>
<protein>
    <recommendedName>
        <fullName evidence="1">Lipid-A-disaccharide synthase</fullName>
        <ecNumber evidence="1">2.4.1.182</ecNumber>
    </recommendedName>
</protein>
<accession>Q3JR42</accession>
<proteinExistence type="inferred from homology"/>
<comment type="function">
    <text evidence="1">Condensation of UDP-2,3-diacylglucosamine and 2,3-diacylglucosamine-1-phosphate to form lipid A disaccharide, a precursor of lipid A, a phosphorylated glycolipid that anchors the lipopolysaccharide to the outer membrane of the cell.</text>
</comment>
<comment type="catalytic activity">
    <reaction evidence="1">
        <text>a lipid X + a UDP-2-N,3-O-bis[(3R)-3-hydroxyacyl]-alpha-D-glucosamine = a lipid A disaccharide + UDP + H(+)</text>
        <dbReference type="Rhea" id="RHEA:67828"/>
        <dbReference type="ChEBI" id="CHEBI:15378"/>
        <dbReference type="ChEBI" id="CHEBI:58223"/>
        <dbReference type="ChEBI" id="CHEBI:137748"/>
        <dbReference type="ChEBI" id="CHEBI:176338"/>
        <dbReference type="ChEBI" id="CHEBI:176343"/>
        <dbReference type="EC" id="2.4.1.182"/>
    </reaction>
</comment>
<comment type="pathway">
    <text evidence="1">Bacterial outer membrane biogenesis; LPS lipid A biosynthesis.</text>
</comment>
<comment type="similarity">
    <text evidence="1">Belongs to the LpxB family.</text>
</comment>
<organism>
    <name type="scientific">Burkholderia pseudomallei (strain 1710b)</name>
    <dbReference type="NCBI Taxonomy" id="320372"/>
    <lineage>
        <taxon>Bacteria</taxon>
        <taxon>Pseudomonadati</taxon>
        <taxon>Pseudomonadota</taxon>
        <taxon>Betaproteobacteria</taxon>
        <taxon>Burkholderiales</taxon>
        <taxon>Burkholderiaceae</taxon>
        <taxon>Burkholderia</taxon>
        <taxon>pseudomallei group</taxon>
    </lineage>
</organism>
<feature type="chain" id="PRO_0000255166" description="Lipid-A-disaccharide synthase">
    <location>
        <begin position="1"/>
        <end position="388"/>
    </location>
</feature>
<reference key="1">
    <citation type="journal article" date="2010" name="Genome Biol. Evol.">
        <title>Continuing evolution of Burkholderia mallei through genome reduction and large-scale rearrangements.</title>
        <authorList>
            <person name="Losada L."/>
            <person name="Ronning C.M."/>
            <person name="DeShazer D."/>
            <person name="Woods D."/>
            <person name="Fedorova N."/>
            <person name="Kim H.S."/>
            <person name="Shabalina S.A."/>
            <person name="Pearson T.R."/>
            <person name="Brinkac L."/>
            <person name="Tan P."/>
            <person name="Nandi T."/>
            <person name="Crabtree J."/>
            <person name="Badger J."/>
            <person name="Beckstrom-Sternberg S."/>
            <person name="Saqib M."/>
            <person name="Schutzer S.E."/>
            <person name="Keim P."/>
            <person name="Nierman W.C."/>
        </authorList>
    </citation>
    <scope>NUCLEOTIDE SEQUENCE [LARGE SCALE GENOMIC DNA]</scope>
    <source>
        <strain>1710b</strain>
    </source>
</reference>